<dbReference type="EMBL" id="GG698899">
    <property type="protein sequence ID" value="EEU45129.1"/>
    <property type="molecule type" value="Genomic_DNA"/>
</dbReference>
<dbReference type="RefSeq" id="XP_003050842.1">
    <property type="nucleotide sequence ID" value="XM_003050796.1"/>
</dbReference>
<dbReference type="SMR" id="C7YRT4"/>
<dbReference type="STRING" id="660122.C7YRT4"/>
<dbReference type="EnsemblFungi" id="NechaT80502">
    <property type="protein sequence ID" value="NechaP80502"/>
    <property type="gene ID" value="NechaG80502"/>
</dbReference>
<dbReference type="GeneID" id="9668001"/>
<dbReference type="KEGG" id="nhe:NECHADRAFT_80502"/>
<dbReference type="VEuPathDB" id="FungiDB:NECHADRAFT_80502"/>
<dbReference type="eggNOG" id="KOG3454">
    <property type="taxonomic scope" value="Eukaryota"/>
</dbReference>
<dbReference type="HOGENOM" id="CLU_079697_2_0_1"/>
<dbReference type="InParanoid" id="C7YRT4"/>
<dbReference type="OMA" id="QMRPPLM"/>
<dbReference type="OrthoDB" id="76567at2759"/>
<dbReference type="Proteomes" id="UP000005206">
    <property type="component" value="Unassembled WGS sequence"/>
</dbReference>
<dbReference type="GO" id="GO:0000243">
    <property type="term" value="C:commitment complex"/>
    <property type="evidence" value="ECO:0007669"/>
    <property type="project" value="UniProtKB-UniRule"/>
</dbReference>
<dbReference type="GO" id="GO:0005685">
    <property type="term" value="C:U1 snRNP"/>
    <property type="evidence" value="ECO:0007669"/>
    <property type="project" value="UniProtKB-UniRule"/>
</dbReference>
<dbReference type="GO" id="GO:0071004">
    <property type="term" value="C:U2-type prespliceosome"/>
    <property type="evidence" value="ECO:0007669"/>
    <property type="project" value="UniProtKB-UniRule"/>
</dbReference>
<dbReference type="GO" id="GO:0003729">
    <property type="term" value="F:mRNA binding"/>
    <property type="evidence" value="ECO:0007669"/>
    <property type="project" value="UniProtKB-UniRule"/>
</dbReference>
<dbReference type="GO" id="GO:0030627">
    <property type="term" value="F:pre-mRNA 5'-splice site binding"/>
    <property type="evidence" value="ECO:0007669"/>
    <property type="project" value="InterPro"/>
</dbReference>
<dbReference type="GO" id="GO:0030619">
    <property type="term" value="F:U1 snRNA binding"/>
    <property type="evidence" value="ECO:0007669"/>
    <property type="project" value="UniProtKB-UniRule"/>
</dbReference>
<dbReference type="GO" id="GO:0008270">
    <property type="term" value="F:zinc ion binding"/>
    <property type="evidence" value="ECO:0007669"/>
    <property type="project" value="UniProtKB-UniRule"/>
</dbReference>
<dbReference type="GO" id="GO:0000395">
    <property type="term" value="P:mRNA 5'-splice site recognition"/>
    <property type="evidence" value="ECO:0007669"/>
    <property type="project" value="UniProtKB-UniRule"/>
</dbReference>
<dbReference type="GO" id="GO:0000387">
    <property type="term" value="P:spliceosomal snRNP assembly"/>
    <property type="evidence" value="ECO:0007669"/>
    <property type="project" value="UniProtKB-UniRule"/>
</dbReference>
<dbReference type="FunFam" id="3.30.160.60:FF:000059">
    <property type="entry name" value="U1 small nuclear ribonucleoprotein C"/>
    <property type="match status" value="1"/>
</dbReference>
<dbReference type="Gene3D" id="3.30.160.60">
    <property type="entry name" value="Classic Zinc Finger"/>
    <property type="match status" value="1"/>
</dbReference>
<dbReference type="HAMAP" id="MF_03153">
    <property type="entry name" value="U1_C"/>
    <property type="match status" value="1"/>
</dbReference>
<dbReference type="InterPro" id="IPR000690">
    <property type="entry name" value="Matrin/U1-C_Znf_C2H2"/>
</dbReference>
<dbReference type="InterPro" id="IPR003604">
    <property type="entry name" value="Matrin/U1-like-C_Znf_C2H2"/>
</dbReference>
<dbReference type="InterPro" id="IPR013085">
    <property type="entry name" value="U1-CZ_Znf_C2H2"/>
</dbReference>
<dbReference type="InterPro" id="IPR017340">
    <property type="entry name" value="U1_snRNP-C"/>
</dbReference>
<dbReference type="InterPro" id="IPR036236">
    <property type="entry name" value="Znf_C2H2_sf"/>
</dbReference>
<dbReference type="PANTHER" id="PTHR31148">
    <property type="entry name" value="U1 SMALL NUCLEAR RIBONUCLEOPROTEIN C"/>
    <property type="match status" value="1"/>
</dbReference>
<dbReference type="PANTHER" id="PTHR31148:SF1">
    <property type="entry name" value="U1 SMALL NUCLEAR RIBONUCLEOPROTEIN C"/>
    <property type="match status" value="1"/>
</dbReference>
<dbReference type="Pfam" id="PF06220">
    <property type="entry name" value="zf-U1"/>
    <property type="match status" value="1"/>
</dbReference>
<dbReference type="PIRSF" id="PIRSF037969">
    <property type="entry name" value="U1_snRNP-C"/>
    <property type="match status" value="1"/>
</dbReference>
<dbReference type="SMART" id="SM00451">
    <property type="entry name" value="ZnF_U1"/>
    <property type="match status" value="1"/>
</dbReference>
<dbReference type="SUPFAM" id="SSF57667">
    <property type="entry name" value="beta-beta-alpha zinc fingers"/>
    <property type="match status" value="1"/>
</dbReference>
<dbReference type="PROSITE" id="PS50171">
    <property type="entry name" value="ZF_MATRIN"/>
    <property type="match status" value="1"/>
</dbReference>
<evidence type="ECO:0000255" key="1">
    <source>
        <dbReference type="HAMAP-Rule" id="MF_03153"/>
    </source>
</evidence>
<evidence type="ECO:0000256" key="2">
    <source>
        <dbReference type="SAM" id="MobiDB-lite"/>
    </source>
</evidence>
<gene>
    <name type="ORF">NECHADRAFT_80502</name>
</gene>
<feature type="chain" id="PRO_0000414289" description="U1 small nuclear ribonucleoprotein C">
    <location>
        <begin position="1"/>
        <end position="204"/>
    </location>
</feature>
<feature type="zinc finger region" description="Matrin-type" evidence="1">
    <location>
        <begin position="4"/>
        <end position="36"/>
    </location>
</feature>
<feature type="region of interest" description="Disordered" evidence="2">
    <location>
        <begin position="65"/>
        <end position="204"/>
    </location>
</feature>
<feature type="compositionally biased region" description="Pro residues" evidence="2">
    <location>
        <begin position="77"/>
        <end position="154"/>
    </location>
</feature>
<feature type="compositionally biased region" description="Pro residues" evidence="2">
    <location>
        <begin position="166"/>
        <end position="192"/>
    </location>
</feature>
<accession>C7YRT4</accession>
<reference key="1">
    <citation type="journal article" date="2009" name="PLoS Genet.">
        <title>The genome of Nectria haematococca: contribution of supernumerary chromosomes to gene expansion.</title>
        <authorList>
            <person name="Coleman J.J."/>
            <person name="Rounsley S.D."/>
            <person name="Rodriguez-Carres M."/>
            <person name="Kuo A."/>
            <person name="Wasmann C.C."/>
            <person name="Grimwood J."/>
            <person name="Schmutz J."/>
            <person name="Taga M."/>
            <person name="White G.J."/>
            <person name="Zhou S."/>
            <person name="Schwartz D.C."/>
            <person name="Freitag M."/>
            <person name="Ma L.-J."/>
            <person name="Danchin E.G.J."/>
            <person name="Henrissat B."/>
            <person name="Coutinho P.M."/>
            <person name="Nelson D.R."/>
            <person name="Straney D."/>
            <person name="Napoli C.A."/>
            <person name="Barker B.M."/>
            <person name="Gribskov M."/>
            <person name="Rep M."/>
            <person name="Kroken S."/>
            <person name="Molnar I."/>
            <person name="Rensing C."/>
            <person name="Kennell J.C."/>
            <person name="Zamora J."/>
            <person name="Farman M.L."/>
            <person name="Selker E.U."/>
            <person name="Salamov A."/>
            <person name="Shapiro H."/>
            <person name="Pangilinan J."/>
            <person name="Lindquist E."/>
            <person name="Lamers C."/>
            <person name="Grigoriev I.V."/>
            <person name="Geiser D.M."/>
            <person name="Covert S.F."/>
            <person name="Temporini E."/>
            <person name="VanEtten H.D."/>
        </authorList>
    </citation>
    <scope>NUCLEOTIDE SEQUENCE [LARGE SCALE GENOMIC DNA]</scope>
    <source>
        <strain>ATCC MYA-4622 / CBS 123669 / FGSC 9596 / NRRL 45880 / 77-13-4</strain>
    </source>
</reference>
<organism>
    <name type="scientific">Fusarium vanettenii (strain ATCC MYA-4622 / CBS 123669 / FGSC 9596 / NRRL 45880 / 77-13-4)</name>
    <name type="common">Fusarium solani subsp. pisi</name>
    <dbReference type="NCBI Taxonomy" id="660122"/>
    <lineage>
        <taxon>Eukaryota</taxon>
        <taxon>Fungi</taxon>
        <taxon>Dikarya</taxon>
        <taxon>Ascomycota</taxon>
        <taxon>Pezizomycotina</taxon>
        <taxon>Sordariomycetes</taxon>
        <taxon>Hypocreomycetidae</taxon>
        <taxon>Hypocreales</taxon>
        <taxon>Nectriaceae</taxon>
        <taxon>Fusarium</taxon>
        <taxon>Fusarium solani species complex</taxon>
        <taxon>Fusarium vanettenii</taxon>
    </lineage>
</organism>
<comment type="function">
    <text evidence="1">Component of the spliceosomal U1 snRNP, which is essential for recognition of the pre-mRNA 5' splice-site and the subsequent assembly of the spliceosome. U1-C is directly involved in initial 5' splice-site recognition for both constitutive and regulated alternative splicing. The interaction with the 5' splice-site seems to precede base-pairing between the pre-mRNA and the U1 snRNA. Stimulates commitment or early (E) complex formation by stabilizing the base pairing of the 5' end of the U1 snRNA and the 5' splice-site region.</text>
</comment>
<comment type="subunit">
    <text evidence="1">U1 snRNP is composed of the 7 core Sm proteins B/B', D1, D2, D3, E, F and G that assemble in a heptameric protein ring on the Sm site of the small nuclear RNA to form the core snRNP, and at least 3 U1 snRNP-specific proteins U1-70K, U1-A and U1-C. U1-C interacts with U1 snRNA and the 5' splice-site region of the pre-mRNA.</text>
</comment>
<comment type="subcellular location">
    <subcellularLocation>
        <location evidence="1">Nucleus</location>
    </subcellularLocation>
</comment>
<comment type="similarity">
    <text evidence="1">Belongs to the U1 small nuclear ribonucleoprotein C family.</text>
</comment>
<name>RU1C_FUSV7</name>
<keyword id="KW-0479">Metal-binding</keyword>
<keyword id="KW-0539">Nucleus</keyword>
<keyword id="KW-1185">Reference proteome</keyword>
<keyword id="KW-0687">Ribonucleoprotein</keyword>
<keyword id="KW-0694">RNA-binding</keyword>
<keyword id="KW-0862">Zinc</keyword>
<keyword id="KW-0863">Zinc-finger</keyword>
<protein>
    <recommendedName>
        <fullName evidence="1">U1 small nuclear ribonucleoprotein C</fullName>
        <shortName evidence="1">U1 snRNP C</shortName>
        <shortName evidence="1">U1-C</shortName>
        <shortName evidence="1">U1C</shortName>
    </recommendedName>
</protein>
<sequence>MPKFFCDYCDVYLTHDSMSVRKAHNSGRNHLRNVVDYYQQIGHEKAQSVIDSITSSYAAEGQAHANPMLPQNQPGQGFPPPPFGFPGGIPPPFPGMPGAPPGQFPQGMPPPPGGGRGMPPMPPFPPGPNGMPVPPNGLPFPPPGGFPFPPPGAPGAPGAPGASGGAPPPFPGLPGMPPPGQGFPPGGPPGFAPPGAGAPGHEKR</sequence>
<proteinExistence type="inferred from homology"/>